<evidence type="ECO:0000255" key="1">
    <source>
        <dbReference type="HAMAP-Rule" id="MF_01334"/>
    </source>
</evidence>
<evidence type="ECO:0000305" key="2"/>
<proteinExistence type="inferred from homology"/>
<accession>B5RMX8</accession>
<name>RL25_BORDL</name>
<keyword id="KW-0687">Ribonucleoprotein</keyword>
<keyword id="KW-0689">Ribosomal protein</keyword>
<keyword id="KW-0694">RNA-binding</keyword>
<keyword id="KW-0699">rRNA-binding</keyword>
<reference key="1">
    <citation type="journal article" date="2008" name="PLoS Genet.">
        <title>The genome of Borrelia recurrentis, the agent of deadly louse-borne relapsing fever, is a degraded subset of tick-borne Borrelia duttonii.</title>
        <authorList>
            <person name="Lescot M."/>
            <person name="Audic S."/>
            <person name="Robert C."/>
            <person name="Nguyen T.T."/>
            <person name="Blanc G."/>
            <person name="Cutler S.J."/>
            <person name="Wincker P."/>
            <person name="Couloux A."/>
            <person name="Claverie J.-M."/>
            <person name="Raoult D."/>
            <person name="Drancourt M."/>
        </authorList>
    </citation>
    <scope>NUCLEOTIDE SEQUENCE [LARGE SCALE GENOMIC DNA]</scope>
    <source>
        <strain>Ly</strain>
    </source>
</reference>
<sequence>MYSSRILKYEGRSKFGSSCARILRAKSEIPAVVYGKESDVLHIKINSNEFDKKFAKFTDNTVLLLNDGMVEKCVFIKDVSENLTKKFIYHIDFYEVDRTREIERDISIKFIGASVGVKEGGTLSVLRNTVKVKALPLNLPEFVEVDLTPVKKGDQITLKDIVLSDNVKLSETDENLAVLFVK</sequence>
<dbReference type="EMBL" id="CP000976">
    <property type="protein sequence ID" value="ACH93714.1"/>
    <property type="molecule type" value="Genomic_DNA"/>
</dbReference>
<dbReference type="RefSeq" id="WP_012538523.1">
    <property type="nucleotide sequence ID" value="NC_011229.1"/>
</dbReference>
<dbReference type="SMR" id="B5RMX8"/>
<dbReference type="STRING" id="412419.BDU_792"/>
<dbReference type="KEGG" id="bdu:BDU_792"/>
<dbReference type="eggNOG" id="COG1825">
    <property type="taxonomic scope" value="Bacteria"/>
</dbReference>
<dbReference type="HOGENOM" id="CLU_075939_2_0_12"/>
<dbReference type="OrthoDB" id="9790002at2"/>
<dbReference type="Proteomes" id="UP000000611">
    <property type="component" value="Chromosome"/>
</dbReference>
<dbReference type="GO" id="GO:0022625">
    <property type="term" value="C:cytosolic large ribosomal subunit"/>
    <property type="evidence" value="ECO:0007669"/>
    <property type="project" value="TreeGrafter"/>
</dbReference>
<dbReference type="GO" id="GO:0008097">
    <property type="term" value="F:5S rRNA binding"/>
    <property type="evidence" value="ECO:0007669"/>
    <property type="project" value="InterPro"/>
</dbReference>
<dbReference type="GO" id="GO:0003735">
    <property type="term" value="F:structural constituent of ribosome"/>
    <property type="evidence" value="ECO:0007669"/>
    <property type="project" value="InterPro"/>
</dbReference>
<dbReference type="GO" id="GO:0006412">
    <property type="term" value="P:translation"/>
    <property type="evidence" value="ECO:0007669"/>
    <property type="project" value="UniProtKB-UniRule"/>
</dbReference>
<dbReference type="CDD" id="cd00495">
    <property type="entry name" value="Ribosomal_L25_TL5_CTC"/>
    <property type="match status" value="1"/>
</dbReference>
<dbReference type="Gene3D" id="2.170.120.20">
    <property type="entry name" value="Ribosomal protein L25, beta domain"/>
    <property type="match status" value="1"/>
</dbReference>
<dbReference type="Gene3D" id="2.40.240.10">
    <property type="entry name" value="Ribosomal Protein L25, Chain P"/>
    <property type="match status" value="1"/>
</dbReference>
<dbReference type="HAMAP" id="MF_01334">
    <property type="entry name" value="Ribosomal_bL25_CTC"/>
    <property type="match status" value="1"/>
</dbReference>
<dbReference type="InterPro" id="IPR020056">
    <property type="entry name" value="Rbsml_bL25/Gln-tRNA_synth_N"/>
</dbReference>
<dbReference type="InterPro" id="IPR011035">
    <property type="entry name" value="Ribosomal_bL25/Gln-tRNA_synth"/>
</dbReference>
<dbReference type="InterPro" id="IPR020057">
    <property type="entry name" value="Ribosomal_bL25_b-dom"/>
</dbReference>
<dbReference type="InterPro" id="IPR037121">
    <property type="entry name" value="Ribosomal_bL25_C"/>
</dbReference>
<dbReference type="InterPro" id="IPR001021">
    <property type="entry name" value="Ribosomal_bL25_long"/>
</dbReference>
<dbReference type="InterPro" id="IPR029751">
    <property type="entry name" value="Ribosomal_L25_dom"/>
</dbReference>
<dbReference type="InterPro" id="IPR020930">
    <property type="entry name" value="Ribosomal_uL5_bac-type"/>
</dbReference>
<dbReference type="NCBIfam" id="TIGR00731">
    <property type="entry name" value="bL25_bact_ctc"/>
    <property type="match status" value="1"/>
</dbReference>
<dbReference type="NCBIfam" id="NF004135">
    <property type="entry name" value="PRK05618.3-1"/>
    <property type="match status" value="1"/>
</dbReference>
<dbReference type="PANTHER" id="PTHR33284">
    <property type="entry name" value="RIBOSOMAL PROTEIN L25/GLN-TRNA SYNTHETASE, ANTI-CODON-BINDING DOMAIN-CONTAINING PROTEIN"/>
    <property type="match status" value="1"/>
</dbReference>
<dbReference type="PANTHER" id="PTHR33284:SF1">
    <property type="entry name" value="RIBOSOMAL PROTEIN L25_GLN-TRNA SYNTHETASE, ANTI-CODON-BINDING DOMAIN-CONTAINING PROTEIN"/>
    <property type="match status" value="1"/>
</dbReference>
<dbReference type="Pfam" id="PF01386">
    <property type="entry name" value="Ribosomal_L25p"/>
    <property type="match status" value="1"/>
</dbReference>
<dbReference type="Pfam" id="PF14693">
    <property type="entry name" value="Ribosomal_TL5_C"/>
    <property type="match status" value="1"/>
</dbReference>
<dbReference type="SUPFAM" id="SSF50715">
    <property type="entry name" value="Ribosomal protein L25-like"/>
    <property type="match status" value="1"/>
</dbReference>
<comment type="function">
    <text evidence="1">This is one of the proteins that binds to the 5S RNA in the ribosome where it forms part of the central protuberance.</text>
</comment>
<comment type="subunit">
    <text evidence="1">Part of the 50S ribosomal subunit; part of the 5S rRNA/L5/L18/L25 subcomplex. Contacts the 5S rRNA. Binds to the 5S rRNA independently of L5 and L18.</text>
</comment>
<comment type="similarity">
    <text evidence="1">Belongs to the bacterial ribosomal protein bL25 family. CTC subfamily.</text>
</comment>
<protein>
    <recommendedName>
        <fullName evidence="1">Large ribosomal subunit protein bL25</fullName>
    </recommendedName>
    <alternativeName>
        <fullName evidence="2">50S ribosomal protein L25</fullName>
    </alternativeName>
    <alternativeName>
        <fullName evidence="1">General stress protein CTC</fullName>
    </alternativeName>
</protein>
<feature type="chain" id="PRO_1000142490" description="Large ribosomal subunit protein bL25">
    <location>
        <begin position="1"/>
        <end position="182"/>
    </location>
</feature>
<gene>
    <name evidence="1" type="primary">rplY</name>
    <name evidence="1" type="synonym">ctc</name>
    <name type="ordered locus">BDU_792</name>
</gene>
<organism>
    <name type="scientific">Borrelia duttonii (strain Ly)</name>
    <dbReference type="NCBI Taxonomy" id="412419"/>
    <lineage>
        <taxon>Bacteria</taxon>
        <taxon>Pseudomonadati</taxon>
        <taxon>Spirochaetota</taxon>
        <taxon>Spirochaetia</taxon>
        <taxon>Spirochaetales</taxon>
        <taxon>Borreliaceae</taxon>
        <taxon>Borrelia</taxon>
    </lineage>
</organism>